<proteinExistence type="inferred from homology"/>
<dbReference type="EC" id="6.3.1.5" evidence="1"/>
<dbReference type="EMBL" id="CP000948">
    <property type="protein sequence ID" value="ACB02939.1"/>
    <property type="molecule type" value="Genomic_DNA"/>
</dbReference>
<dbReference type="RefSeq" id="WP_000175026.1">
    <property type="nucleotide sequence ID" value="NC_010473.1"/>
</dbReference>
<dbReference type="SMR" id="B1XGK1"/>
<dbReference type="KEGG" id="ecd:ECDH10B_1878"/>
<dbReference type="HOGENOM" id="CLU_059327_3_0_6"/>
<dbReference type="UniPathway" id="UPA00253">
    <property type="reaction ID" value="UER00333"/>
</dbReference>
<dbReference type="GO" id="GO:0005737">
    <property type="term" value="C:cytoplasm"/>
    <property type="evidence" value="ECO:0007669"/>
    <property type="project" value="InterPro"/>
</dbReference>
<dbReference type="GO" id="GO:0005524">
    <property type="term" value="F:ATP binding"/>
    <property type="evidence" value="ECO:0007669"/>
    <property type="project" value="UniProtKB-UniRule"/>
</dbReference>
<dbReference type="GO" id="GO:0004359">
    <property type="term" value="F:glutaminase activity"/>
    <property type="evidence" value="ECO:0007669"/>
    <property type="project" value="InterPro"/>
</dbReference>
<dbReference type="GO" id="GO:0046872">
    <property type="term" value="F:metal ion binding"/>
    <property type="evidence" value="ECO:0007669"/>
    <property type="project" value="UniProtKB-KW"/>
</dbReference>
<dbReference type="GO" id="GO:0003952">
    <property type="term" value="F:NAD+ synthase (glutamine-hydrolyzing) activity"/>
    <property type="evidence" value="ECO:0007669"/>
    <property type="project" value="InterPro"/>
</dbReference>
<dbReference type="GO" id="GO:0008795">
    <property type="term" value="F:NAD+ synthase activity"/>
    <property type="evidence" value="ECO:0007669"/>
    <property type="project" value="UniProtKB-UniRule"/>
</dbReference>
<dbReference type="GO" id="GO:0009435">
    <property type="term" value="P:NAD biosynthetic process"/>
    <property type="evidence" value="ECO:0007669"/>
    <property type="project" value="UniProtKB-UniRule"/>
</dbReference>
<dbReference type="CDD" id="cd00553">
    <property type="entry name" value="NAD_synthase"/>
    <property type="match status" value="1"/>
</dbReference>
<dbReference type="FunFam" id="3.40.50.620:FF:000015">
    <property type="entry name" value="NH(3)-dependent NAD(+) synthetase"/>
    <property type="match status" value="1"/>
</dbReference>
<dbReference type="Gene3D" id="3.40.50.620">
    <property type="entry name" value="HUPs"/>
    <property type="match status" value="1"/>
</dbReference>
<dbReference type="HAMAP" id="MF_00193">
    <property type="entry name" value="NadE_ammonia_dep"/>
    <property type="match status" value="1"/>
</dbReference>
<dbReference type="InterPro" id="IPR022310">
    <property type="entry name" value="NAD/GMP_synthase"/>
</dbReference>
<dbReference type="InterPro" id="IPR003694">
    <property type="entry name" value="NAD_synthase"/>
</dbReference>
<dbReference type="InterPro" id="IPR022926">
    <property type="entry name" value="NH(3)-dep_NAD(+)_synth"/>
</dbReference>
<dbReference type="InterPro" id="IPR014729">
    <property type="entry name" value="Rossmann-like_a/b/a_fold"/>
</dbReference>
<dbReference type="NCBIfam" id="TIGR00552">
    <property type="entry name" value="nadE"/>
    <property type="match status" value="1"/>
</dbReference>
<dbReference type="NCBIfam" id="NF001979">
    <property type="entry name" value="PRK00768.1"/>
    <property type="match status" value="1"/>
</dbReference>
<dbReference type="PANTHER" id="PTHR23090">
    <property type="entry name" value="NH 3 /GLUTAMINE-DEPENDENT NAD + SYNTHETASE"/>
    <property type="match status" value="1"/>
</dbReference>
<dbReference type="PANTHER" id="PTHR23090:SF7">
    <property type="entry name" value="NH(3)-DEPENDENT NAD(+) SYNTHETASE"/>
    <property type="match status" value="1"/>
</dbReference>
<dbReference type="Pfam" id="PF02540">
    <property type="entry name" value="NAD_synthase"/>
    <property type="match status" value="1"/>
</dbReference>
<dbReference type="SUPFAM" id="SSF52402">
    <property type="entry name" value="Adenine nucleotide alpha hydrolases-like"/>
    <property type="match status" value="1"/>
</dbReference>
<accession>B1XGK1</accession>
<sequence length="275" mass="30637">MTLQQQIIKALGAKPQINAEEEIRRSVDFLKSYLQTYPFIKSLVLGISGGQDSTLAGKLCQMAINELRLETGNESLQFIAVRLPYGVQADEQDCQDAIAFIQPDRVLTVNIKGAVLASEQALREAGIELSDFVRGNEKARERMKAQYSIAGMTSGVVVGTDHAAEAITGFFTKYGDGGTDINPLYRLNKRQGKQLLAALACPEHLYKKAPTADLEDDRPSLPDEVALGVTYDNIDDYLEGKNVPQQVARTIENWYLKTEHKRRPPITVFDDFWKK</sequence>
<keyword id="KW-0067">ATP-binding</keyword>
<keyword id="KW-0436">Ligase</keyword>
<keyword id="KW-0460">Magnesium</keyword>
<keyword id="KW-0479">Metal-binding</keyword>
<keyword id="KW-0520">NAD</keyword>
<keyword id="KW-0547">Nucleotide-binding</keyword>
<name>NADE_ECODH</name>
<evidence type="ECO:0000255" key="1">
    <source>
        <dbReference type="HAMAP-Rule" id="MF_00193"/>
    </source>
</evidence>
<gene>
    <name evidence="1" type="primary">nadE</name>
    <name type="ordered locus">ECDH10B_1878</name>
</gene>
<organism>
    <name type="scientific">Escherichia coli (strain K12 / DH10B)</name>
    <dbReference type="NCBI Taxonomy" id="316385"/>
    <lineage>
        <taxon>Bacteria</taxon>
        <taxon>Pseudomonadati</taxon>
        <taxon>Pseudomonadota</taxon>
        <taxon>Gammaproteobacteria</taxon>
        <taxon>Enterobacterales</taxon>
        <taxon>Enterobacteriaceae</taxon>
        <taxon>Escherichia</taxon>
    </lineage>
</organism>
<feature type="chain" id="PRO_1000099019" description="NH(3)-dependent NAD(+) synthetase">
    <location>
        <begin position="1"/>
        <end position="275"/>
    </location>
</feature>
<feature type="binding site" evidence="1">
    <location>
        <begin position="46"/>
        <end position="53"/>
    </location>
    <ligand>
        <name>ATP</name>
        <dbReference type="ChEBI" id="CHEBI:30616"/>
    </ligand>
</feature>
<feature type="binding site" evidence="1">
    <location>
        <position position="52"/>
    </location>
    <ligand>
        <name>Mg(2+)</name>
        <dbReference type="ChEBI" id="CHEBI:18420"/>
    </ligand>
</feature>
<feature type="binding site" evidence="1">
    <location>
        <position position="140"/>
    </location>
    <ligand>
        <name>deamido-NAD(+)</name>
        <dbReference type="ChEBI" id="CHEBI:58437"/>
    </ligand>
</feature>
<feature type="binding site" evidence="1">
    <location>
        <position position="160"/>
    </location>
    <ligand>
        <name>ATP</name>
        <dbReference type="ChEBI" id="CHEBI:30616"/>
    </ligand>
</feature>
<feature type="binding site" evidence="1">
    <location>
        <position position="165"/>
    </location>
    <ligand>
        <name>Mg(2+)</name>
        <dbReference type="ChEBI" id="CHEBI:18420"/>
    </ligand>
</feature>
<feature type="binding site" evidence="1">
    <location>
        <position position="173"/>
    </location>
    <ligand>
        <name>deamido-NAD(+)</name>
        <dbReference type="ChEBI" id="CHEBI:58437"/>
    </ligand>
</feature>
<feature type="binding site" evidence="1">
    <location>
        <position position="180"/>
    </location>
    <ligand>
        <name>deamido-NAD(+)</name>
        <dbReference type="ChEBI" id="CHEBI:58437"/>
    </ligand>
</feature>
<feature type="binding site" evidence="1">
    <location>
        <position position="189"/>
    </location>
    <ligand>
        <name>ATP</name>
        <dbReference type="ChEBI" id="CHEBI:30616"/>
    </ligand>
</feature>
<feature type="binding site" evidence="1">
    <location>
        <position position="211"/>
    </location>
    <ligand>
        <name>ATP</name>
        <dbReference type="ChEBI" id="CHEBI:30616"/>
    </ligand>
</feature>
<feature type="binding site" evidence="1">
    <location>
        <begin position="260"/>
        <end position="261"/>
    </location>
    <ligand>
        <name>deamido-NAD(+)</name>
        <dbReference type="ChEBI" id="CHEBI:58437"/>
    </ligand>
</feature>
<comment type="function">
    <text evidence="1">Catalyzes the ATP-dependent amidation of deamido-NAD to form NAD. Uses ammonia as a nitrogen source.</text>
</comment>
<comment type="catalytic activity">
    <reaction evidence="1">
        <text>deamido-NAD(+) + NH4(+) + ATP = AMP + diphosphate + NAD(+) + H(+)</text>
        <dbReference type="Rhea" id="RHEA:21188"/>
        <dbReference type="ChEBI" id="CHEBI:15378"/>
        <dbReference type="ChEBI" id="CHEBI:28938"/>
        <dbReference type="ChEBI" id="CHEBI:30616"/>
        <dbReference type="ChEBI" id="CHEBI:33019"/>
        <dbReference type="ChEBI" id="CHEBI:57540"/>
        <dbReference type="ChEBI" id="CHEBI:58437"/>
        <dbReference type="ChEBI" id="CHEBI:456215"/>
        <dbReference type="EC" id="6.3.1.5"/>
    </reaction>
</comment>
<comment type="pathway">
    <text evidence="1">Cofactor biosynthesis; NAD(+) biosynthesis; NAD(+) from deamido-NAD(+) (ammonia route): step 1/1.</text>
</comment>
<comment type="subunit">
    <text evidence="1">Homodimer.</text>
</comment>
<comment type="similarity">
    <text evidence="1">Belongs to the NAD synthetase family.</text>
</comment>
<protein>
    <recommendedName>
        <fullName evidence="1">NH(3)-dependent NAD(+) synthetase</fullName>
        <ecNumber evidence="1">6.3.1.5</ecNumber>
    </recommendedName>
</protein>
<reference key="1">
    <citation type="journal article" date="2008" name="J. Bacteriol.">
        <title>The complete genome sequence of Escherichia coli DH10B: insights into the biology of a laboratory workhorse.</title>
        <authorList>
            <person name="Durfee T."/>
            <person name="Nelson R."/>
            <person name="Baldwin S."/>
            <person name="Plunkett G. III"/>
            <person name="Burland V."/>
            <person name="Mau B."/>
            <person name="Petrosino J.F."/>
            <person name="Qin X."/>
            <person name="Muzny D.M."/>
            <person name="Ayele M."/>
            <person name="Gibbs R.A."/>
            <person name="Csorgo B."/>
            <person name="Posfai G."/>
            <person name="Weinstock G.M."/>
            <person name="Blattner F.R."/>
        </authorList>
    </citation>
    <scope>NUCLEOTIDE SEQUENCE [LARGE SCALE GENOMIC DNA]</scope>
    <source>
        <strain>K12 / DH10B</strain>
    </source>
</reference>